<protein>
    <recommendedName>
        <fullName>Proline-specific permease ProY</fullName>
    </recommendedName>
</protein>
<feature type="chain" id="PRO_0000054209" description="Proline-specific permease ProY">
    <location>
        <begin position="1"/>
        <end position="457"/>
    </location>
</feature>
<feature type="topological domain" description="Cytoplasmic" evidence="2">
    <location>
        <begin position="1"/>
        <end position="17"/>
    </location>
</feature>
<feature type="transmembrane region" description="Helical" evidence="2">
    <location>
        <begin position="18"/>
        <end position="38"/>
    </location>
</feature>
<feature type="transmembrane region" description="Helical" evidence="2">
    <location>
        <begin position="39"/>
        <end position="59"/>
    </location>
</feature>
<feature type="topological domain" description="Cytoplasmic" evidence="2">
    <location>
        <begin position="60"/>
        <end position="84"/>
    </location>
</feature>
<feature type="transmembrane region" description="Helical" evidence="2">
    <location>
        <begin position="85"/>
        <end position="105"/>
    </location>
</feature>
<feature type="topological domain" description="Periplasmic" evidence="2">
    <location>
        <begin position="106"/>
        <end position="113"/>
    </location>
</feature>
<feature type="transmembrane region" description="Helical" evidence="2">
    <location>
        <begin position="114"/>
        <end position="134"/>
    </location>
</feature>
<feature type="topological domain" description="Cytoplasmic" evidence="2">
    <location>
        <begin position="135"/>
        <end position="156"/>
    </location>
</feature>
<feature type="transmembrane region" description="Helical" evidence="2">
    <location>
        <begin position="157"/>
        <end position="177"/>
    </location>
</feature>
<feature type="topological domain" description="Periplasmic" evidence="2">
    <location>
        <begin position="178"/>
        <end position="197"/>
    </location>
</feature>
<feature type="transmembrane region" description="Helical" evidence="2">
    <location>
        <begin position="198"/>
        <end position="218"/>
    </location>
</feature>
<feature type="topological domain" description="Cytoplasmic" evidence="2">
    <location>
        <begin position="219"/>
        <end position="242"/>
    </location>
</feature>
<feature type="transmembrane region" description="Helical" evidence="2">
    <location>
        <begin position="243"/>
        <end position="263"/>
    </location>
</feature>
<feature type="topological domain" description="Periplasmic" evidence="2">
    <location>
        <begin position="264"/>
        <end position="277"/>
    </location>
</feature>
<feature type="transmembrane region" description="Helical" evidence="2">
    <location>
        <begin position="278"/>
        <end position="298"/>
    </location>
</feature>
<feature type="topological domain" description="Cytoplasmic" evidence="2">
    <location>
        <begin position="299"/>
        <end position="331"/>
    </location>
</feature>
<feature type="transmembrane region" description="Helical" evidence="2">
    <location>
        <begin position="332"/>
        <end position="352"/>
    </location>
</feature>
<feature type="topological domain" description="Periplasmic" evidence="2">
    <location>
        <begin position="353"/>
        <end position="355"/>
    </location>
</feature>
<feature type="transmembrane region" description="Helical" evidence="2">
    <location>
        <begin position="356"/>
        <end position="376"/>
    </location>
</feature>
<feature type="topological domain" description="Cytoplasmic" evidence="2">
    <location>
        <begin position="377"/>
        <end position="399"/>
    </location>
</feature>
<feature type="transmembrane region" description="Helical" evidence="2">
    <location>
        <begin position="400"/>
        <end position="420"/>
    </location>
</feature>
<feature type="topological domain" description="Periplasmic" evidence="2">
    <location>
        <begin position="421"/>
        <end position="424"/>
    </location>
</feature>
<feature type="transmembrane region" description="Helical" evidence="2">
    <location>
        <begin position="425"/>
        <end position="445"/>
    </location>
</feature>
<feature type="topological domain" description="Cytoplasmic" evidence="2">
    <location>
        <begin position="446"/>
        <end position="457"/>
    </location>
</feature>
<gene>
    <name type="primary">proY</name>
    <name type="ordered locus">c0512</name>
</gene>
<keyword id="KW-0029">Amino-acid transport</keyword>
<keyword id="KW-0997">Cell inner membrane</keyword>
<keyword id="KW-1003">Cell membrane</keyword>
<keyword id="KW-0472">Membrane</keyword>
<keyword id="KW-1185">Reference proteome</keyword>
<keyword id="KW-0812">Transmembrane</keyword>
<keyword id="KW-1133">Transmembrane helix</keyword>
<keyword id="KW-0813">Transport</keyword>
<sequence length="457" mass="50216">MESKNKLKRGLSTRHIRFMALGSAIGTGLFYGSADAIKMAGPSVLLAYIIGGIAAYIIMRALGEMSVHNPAASSFSRYAQENLGPLAGYITGWTYCFEILIVAIADVTAFGIYMGVWFPTVPHWIWVLSVVLIICAVNLMSVKVFGELEFWFSFFKVATIIIMIVAGFGIIIWGIGNGGQPTGIHNLWSNGGFFSNGWLGMVMSLQMVMFAYGGIEIIGITAGEAKDPEKSIPRAINSVPMRILVFYVGTLFVIMSIYPWNQVGTAGSPFVLTFQHMGITFAASILNFVVLTASLSAINSDVFGVGRMLHGMAEQGSAPKIFSKTSRRGIPWVTVLVMTTALLFAVYLNYIMPENVFLVIASLATFATVWVWIMILLSQIAFRRRLPPEEVKALKFKVPGGVATTIGGLIFLLFIIGLIGYHPDTRISLYVGFAWIVVLLIGWMFKRRHDRQLAENQ</sequence>
<comment type="function">
    <text evidence="1">Permease that is involved in the transport across the cytoplasmic membrane of proline.</text>
</comment>
<comment type="subcellular location">
    <subcellularLocation>
        <location evidence="1">Cell inner membrane</location>
        <topology evidence="1">Multi-pass membrane protein</topology>
    </subcellularLocation>
</comment>
<comment type="similarity">
    <text evidence="3">Belongs to the amino acid-polyamine-organocation (APC) superfamily. Amino acid transporter (AAT) (TC 2.A.3.1) family.</text>
</comment>
<comment type="sequence caution" evidence="3">
    <conflict type="erroneous initiation">
        <sequence resource="EMBL-CDS" id="AAN78990"/>
    </conflict>
</comment>
<reference key="1">
    <citation type="journal article" date="2002" name="Proc. Natl. Acad. Sci. U.S.A.">
        <title>Extensive mosaic structure revealed by the complete genome sequence of uropathogenic Escherichia coli.</title>
        <authorList>
            <person name="Welch R.A."/>
            <person name="Burland V."/>
            <person name="Plunkett G. III"/>
            <person name="Redford P."/>
            <person name="Roesch P."/>
            <person name="Rasko D."/>
            <person name="Buckles E.L."/>
            <person name="Liou S.-R."/>
            <person name="Boutin A."/>
            <person name="Hackett J."/>
            <person name="Stroud D."/>
            <person name="Mayhew G.F."/>
            <person name="Rose D.J."/>
            <person name="Zhou S."/>
            <person name="Schwartz D.C."/>
            <person name="Perna N.T."/>
            <person name="Mobley H.L.T."/>
            <person name="Donnenberg M.S."/>
            <person name="Blattner F.R."/>
        </authorList>
    </citation>
    <scope>NUCLEOTIDE SEQUENCE [LARGE SCALE GENOMIC DNA]</scope>
    <source>
        <strain>CFT073 / ATCC 700928 / UPEC</strain>
    </source>
</reference>
<name>PROY_ECOL6</name>
<accession>P0AAE3</accession>
<accession>P77327</accession>
<evidence type="ECO:0000250" key="1"/>
<evidence type="ECO:0000255" key="2"/>
<evidence type="ECO:0000305" key="3"/>
<proteinExistence type="inferred from homology"/>
<dbReference type="EMBL" id="AE014075">
    <property type="protein sequence ID" value="AAN78990.1"/>
    <property type="status" value="ALT_INIT"/>
    <property type="molecule type" value="Genomic_DNA"/>
</dbReference>
<dbReference type="RefSeq" id="WP_001295329.1">
    <property type="nucleotide sequence ID" value="NZ_CP051263.1"/>
</dbReference>
<dbReference type="SMR" id="P0AAE3"/>
<dbReference type="STRING" id="199310.c0512"/>
<dbReference type="GeneID" id="75202824"/>
<dbReference type="KEGG" id="ecc:c0512"/>
<dbReference type="eggNOG" id="COG1113">
    <property type="taxonomic scope" value="Bacteria"/>
</dbReference>
<dbReference type="HOGENOM" id="CLU_007946_9_3_6"/>
<dbReference type="Proteomes" id="UP000001410">
    <property type="component" value="Chromosome"/>
</dbReference>
<dbReference type="GO" id="GO:0005886">
    <property type="term" value="C:plasma membrane"/>
    <property type="evidence" value="ECO:0007669"/>
    <property type="project" value="UniProtKB-SubCell"/>
</dbReference>
<dbReference type="GO" id="GO:0006865">
    <property type="term" value="P:amino acid transport"/>
    <property type="evidence" value="ECO:0007669"/>
    <property type="project" value="UniProtKB-KW"/>
</dbReference>
<dbReference type="GO" id="GO:0055085">
    <property type="term" value="P:transmembrane transport"/>
    <property type="evidence" value="ECO:0007669"/>
    <property type="project" value="InterPro"/>
</dbReference>
<dbReference type="FunFam" id="1.20.1740.10:FF:000001">
    <property type="entry name" value="Amino acid permease"/>
    <property type="match status" value="1"/>
</dbReference>
<dbReference type="Gene3D" id="1.20.1740.10">
    <property type="entry name" value="Amino acid/polyamine transporter I"/>
    <property type="match status" value="1"/>
</dbReference>
<dbReference type="InterPro" id="IPR004841">
    <property type="entry name" value="AA-permease/SLC12A_dom"/>
</dbReference>
<dbReference type="InterPro" id="IPR004840">
    <property type="entry name" value="Amino_acid_permease_CS"/>
</dbReference>
<dbReference type="NCBIfam" id="NF007876">
    <property type="entry name" value="PRK10580.1"/>
    <property type="match status" value="1"/>
</dbReference>
<dbReference type="PANTHER" id="PTHR43495">
    <property type="entry name" value="GABA PERMEASE"/>
    <property type="match status" value="1"/>
</dbReference>
<dbReference type="PANTHER" id="PTHR43495:SF6">
    <property type="entry name" value="THREONINE_SERINE TRANSPORTER YBXG-RELATED"/>
    <property type="match status" value="1"/>
</dbReference>
<dbReference type="Pfam" id="PF00324">
    <property type="entry name" value="AA_permease"/>
    <property type="match status" value="1"/>
</dbReference>
<dbReference type="PIRSF" id="PIRSF006060">
    <property type="entry name" value="AA_transporter"/>
    <property type="match status" value="1"/>
</dbReference>
<dbReference type="PROSITE" id="PS00218">
    <property type="entry name" value="AMINO_ACID_PERMEASE_1"/>
    <property type="match status" value="1"/>
</dbReference>
<organism>
    <name type="scientific">Escherichia coli O6:H1 (strain CFT073 / ATCC 700928 / UPEC)</name>
    <dbReference type="NCBI Taxonomy" id="199310"/>
    <lineage>
        <taxon>Bacteria</taxon>
        <taxon>Pseudomonadati</taxon>
        <taxon>Pseudomonadota</taxon>
        <taxon>Gammaproteobacteria</taxon>
        <taxon>Enterobacterales</taxon>
        <taxon>Enterobacteriaceae</taxon>
        <taxon>Escherichia</taxon>
    </lineage>
</organism>